<accession>P40795</accession>
<accession>Q9VR71</accession>
<name>FOG_DROME</name>
<protein>
    <recommendedName>
        <fullName>Protein folded gastrulation</fullName>
    </recommendedName>
    <component>
        <recommendedName>
            <fullName>Protein folded gastrulation</fullName>
        </recommendedName>
    </component>
    <component>
        <recommendedName>
            <fullName>G protein-coupled receptor ligand</fullName>
        </recommendedName>
    </component>
</protein>
<proteinExistence type="evidence at transcript level"/>
<keyword id="KW-0133">Cell shape</keyword>
<keyword id="KW-0217">Developmental protein</keyword>
<keyword id="KW-0272">Extracellular matrix</keyword>
<keyword id="KW-0306">Gastrulation</keyword>
<keyword id="KW-0325">Glycoprotein</keyword>
<keyword id="KW-1185">Reference proteome</keyword>
<keyword id="KW-0964">Secreted</keyword>
<keyword id="KW-0732">Signal</keyword>
<gene>
    <name type="primary">fog</name>
    <name type="ORF">CG9559</name>
</gene>
<sequence>MSPPNCLLAVLALTVFIGANNALPITSRPIEGNVQRMVWEDWVNLDPEQRNLTKEKKITAKSIFTLPFRHCPQGHTLFNQLCIPQSNIDPTDLVKQELILAGGSNGSPPPPPIGDYDYGDDEESEEIVYDLSVIPTAMQDGLPPSVGTGDQALPSEDAPLKFNIFEKKFPTGTGEHEEMPLPPDMAAATYAKNISTTPETSTSITPTSTTTFAVPSVPSGEASNRIPGGVDLLAAPSDAFSTSTTLSMPTSNTTTTSNKDIGQVESIVLPADQEHDGLVHLVTSSLSDNDSDDSSTTLNGFNAEADLAQLLKVDAFWPVYDGSIELLPPLFSHRKVAPPLSADQDVKTKHAVDAAEKVGAELEEEVGEEEVTATDILPSEEDEYTTETATTTGDTTVAEASMDTSTATSTSGQSSPHPPEEPEIDERENRLVLIKSKVQPVQLTTTTSATATTAADVANSSSSTDRFHYQHFVEDESSTTTATPEPSSSTPGDPIEQSDMPASDNDNLMTNTIGGRGDDDDDGGHKATSEIHVQQELRLINELVKGKQRQQHQPQKQQLEPTSTEITSALTSTSTEDATTTTTTTTAYTNWSKVMPQLGQSTSETAATTETVATSGQVNEISLTATSASTEVKHFSITNRSYRNSKIIREDRLTVEPEGIVESAASTESAGTAATTPNSSSNPDGYTPLWWLPSIGWRLDRHLDGNGEDQSLLLRFFSTFRGSNTAATTR</sequence>
<reference key="1">
    <citation type="journal article" date="1994" name="Cell">
        <title>A putative cell signal encoded by the folded gastrulation gene coordinates cell shape changes during Drosophila gastrulation.</title>
        <authorList>
            <person name="Costa M."/>
            <person name="Wilson E.T."/>
            <person name="Wieschaus E."/>
        </authorList>
    </citation>
    <scope>NUCLEOTIDE SEQUENCE [MRNA]</scope>
    <scope>FUNCTION</scope>
    <scope>TISSUE SPECIFICITY</scope>
    <scope>DEVELOPMENTAL STAGE</scope>
    <scope>INDUCTION</scope>
</reference>
<reference key="2">
    <citation type="journal article" date="2000" name="Science">
        <title>The genome sequence of Drosophila melanogaster.</title>
        <authorList>
            <person name="Adams M.D."/>
            <person name="Celniker S.E."/>
            <person name="Holt R.A."/>
            <person name="Evans C.A."/>
            <person name="Gocayne J.D."/>
            <person name="Amanatides P.G."/>
            <person name="Scherer S.E."/>
            <person name="Li P.W."/>
            <person name="Hoskins R.A."/>
            <person name="Galle R.F."/>
            <person name="George R.A."/>
            <person name="Lewis S.E."/>
            <person name="Richards S."/>
            <person name="Ashburner M."/>
            <person name="Henderson S.N."/>
            <person name="Sutton G.G."/>
            <person name="Wortman J.R."/>
            <person name="Yandell M.D."/>
            <person name="Zhang Q."/>
            <person name="Chen L.X."/>
            <person name="Brandon R.C."/>
            <person name="Rogers Y.-H.C."/>
            <person name="Blazej R.G."/>
            <person name="Champe M."/>
            <person name="Pfeiffer B.D."/>
            <person name="Wan K.H."/>
            <person name="Doyle C."/>
            <person name="Baxter E.G."/>
            <person name="Helt G."/>
            <person name="Nelson C.R."/>
            <person name="Miklos G.L.G."/>
            <person name="Abril J.F."/>
            <person name="Agbayani A."/>
            <person name="An H.-J."/>
            <person name="Andrews-Pfannkoch C."/>
            <person name="Baldwin D."/>
            <person name="Ballew R.M."/>
            <person name="Basu A."/>
            <person name="Baxendale J."/>
            <person name="Bayraktaroglu L."/>
            <person name="Beasley E.M."/>
            <person name="Beeson K.Y."/>
            <person name="Benos P.V."/>
            <person name="Berman B.P."/>
            <person name="Bhandari D."/>
            <person name="Bolshakov S."/>
            <person name="Borkova D."/>
            <person name="Botchan M.R."/>
            <person name="Bouck J."/>
            <person name="Brokstein P."/>
            <person name="Brottier P."/>
            <person name="Burtis K.C."/>
            <person name="Busam D.A."/>
            <person name="Butler H."/>
            <person name="Cadieu E."/>
            <person name="Center A."/>
            <person name="Chandra I."/>
            <person name="Cherry J.M."/>
            <person name="Cawley S."/>
            <person name="Dahlke C."/>
            <person name="Davenport L.B."/>
            <person name="Davies P."/>
            <person name="de Pablos B."/>
            <person name="Delcher A."/>
            <person name="Deng Z."/>
            <person name="Mays A.D."/>
            <person name="Dew I."/>
            <person name="Dietz S.M."/>
            <person name="Dodson K."/>
            <person name="Doup L.E."/>
            <person name="Downes M."/>
            <person name="Dugan-Rocha S."/>
            <person name="Dunkov B.C."/>
            <person name="Dunn P."/>
            <person name="Durbin K.J."/>
            <person name="Evangelista C.C."/>
            <person name="Ferraz C."/>
            <person name="Ferriera S."/>
            <person name="Fleischmann W."/>
            <person name="Fosler C."/>
            <person name="Gabrielian A.E."/>
            <person name="Garg N.S."/>
            <person name="Gelbart W.M."/>
            <person name="Glasser K."/>
            <person name="Glodek A."/>
            <person name="Gong F."/>
            <person name="Gorrell J.H."/>
            <person name="Gu Z."/>
            <person name="Guan P."/>
            <person name="Harris M."/>
            <person name="Harris N.L."/>
            <person name="Harvey D.A."/>
            <person name="Heiman T.J."/>
            <person name="Hernandez J.R."/>
            <person name="Houck J."/>
            <person name="Hostin D."/>
            <person name="Houston K.A."/>
            <person name="Howland T.J."/>
            <person name="Wei M.-H."/>
            <person name="Ibegwam C."/>
            <person name="Jalali M."/>
            <person name="Kalush F."/>
            <person name="Karpen G.H."/>
            <person name="Ke Z."/>
            <person name="Kennison J.A."/>
            <person name="Ketchum K.A."/>
            <person name="Kimmel B.E."/>
            <person name="Kodira C.D."/>
            <person name="Kraft C.L."/>
            <person name="Kravitz S."/>
            <person name="Kulp D."/>
            <person name="Lai Z."/>
            <person name="Lasko P."/>
            <person name="Lei Y."/>
            <person name="Levitsky A.A."/>
            <person name="Li J.H."/>
            <person name="Li Z."/>
            <person name="Liang Y."/>
            <person name="Lin X."/>
            <person name="Liu X."/>
            <person name="Mattei B."/>
            <person name="McIntosh T.C."/>
            <person name="McLeod M.P."/>
            <person name="McPherson D."/>
            <person name="Merkulov G."/>
            <person name="Milshina N.V."/>
            <person name="Mobarry C."/>
            <person name="Morris J."/>
            <person name="Moshrefi A."/>
            <person name="Mount S.M."/>
            <person name="Moy M."/>
            <person name="Murphy B."/>
            <person name="Murphy L."/>
            <person name="Muzny D.M."/>
            <person name="Nelson D.L."/>
            <person name="Nelson D.R."/>
            <person name="Nelson K.A."/>
            <person name="Nixon K."/>
            <person name="Nusskern D.R."/>
            <person name="Pacleb J.M."/>
            <person name="Palazzolo M."/>
            <person name="Pittman G.S."/>
            <person name="Pan S."/>
            <person name="Pollard J."/>
            <person name="Puri V."/>
            <person name="Reese M.G."/>
            <person name="Reinert K."/>
            <person name="Remington K."/>
            <person name="Saunders R.D.C."/>
            <person name="Scheeler F."/>
            <person name="Shen H."/>
            <person name="Shue B.C."/>
            <person name="Siden-Kiamos I."/>
            <person name="Simpson M."/>
            <person name="Skupski M.P."/>
            <person name="Smith T.J."/>
            <person name="Spier E."/>
            <person name="Spradling A.C."/>
            <person name="Stapleton M."/>
            <person name="Strong R."/>
            <person name="Sun E."/>
            <person name="Svirskas R."/>
            <person name="Tector C."/>
            <person name="Turner R."/>
            <person name="Venter E."/>
            <person name="Wang A.H."/>
            <person name="Wang X."/>
            <person name="Wang Z.-Y."/>
            <person name="Wassarman D.A."/>
            <person name="Weinstock G.M."/>
            <person name="Weissenbach J."/>
            <person name="Williams S.M."/>
            <person name="Woodage T."/>
            <person name="Worley K.C."/>
            <person name="Wu D."/>
            <person name="Yang S."/>
            <person name="Yao Q.A."/>
            <person name="Ye J."/>
            <person name="Yeh R.-F."/>
            <person name="Zaveri J.S."/>
            <person name="Zhan M."/>
            <person name="Zhang G."/>
            <person name="Zhao Q."/>
            <person name="Zheng L."/>
            <person name="Zheng X.H."/>
            <person name="Zhong F.N."/>
            <person name="Zhong W."/>
            <person name="Zhou X."/>
            <person name="Zhu S.C."/>
            <person name="Zhu X."/>
            <person name="Smith H.O."/>
            <person name="Gibbs R.A."/>
            <person name="Myers E.W."/>
            <person name="Rubin G.M."/>
            <person name="Venter J.C."/>
        </authorList>
    </citation>
    <scope>NUCLEOTIDE SEQUENCE [LARGE SCALE GENOMIC DNA]</scope>
    <source>
        <strain>Berkeley</strain>
    </source>
</reference>
<reference key="3">
    <citation type="journal article" date="2002" name="Genome Biol.">
        <title>Annotation of the Drosophila melanogaster euchromatic genome: a systematic review.</title>
        <authorList>
            <person name="Misra S."/>
            <person name="Crosby M.A."/>
            <person name="Mungall C.J."/>
            <person name="Matthews B.B."/>
            <person name="Campbell K.S."/>
            <person name="Hradecky P."/>
            <person name="Huang Y."/>
            <person name="Kaminker J.S."/>
            <person name="Millburn G.H."/>
            <person name="Prochnik S.E."/>
            <person name="Smith C.D."/>
            <person name="Tupy J.L."/>
            <person name="Whitfield E.J."/>
            <person name="Bayraktaroglu L."/>
            <person name="Berman B.P."/>
            <person name="Bettencourt B.R."/>
            <person name="Celniker S.E."/>
            <person name="de Grey A.D.N.J."/>
            <person name="Drysdale R.A."/>
            <person name="Harris N.L."/>
            <person name="Richter J."/>
            <person name="Russo S."/>
            <person name="Schroeder A.J."/>
            <person name="Shu S.Q."/>
            <person name="Stapleton M."/>
            <person name="Yamada C."/>
            <person name="Ashburner M."/>
            <person name="Gelbart W.M."/>
            <person name="Rubin G.M."/>
            <person name="Lewis S.E."/>
        </authorList>
    </citation>
    <scope>GENOME REANNOTATION</scope>
    <source>
        <strain>Berkeley</strain>
    </source>
</reference>
<reference key="4">
    <citation type="journal article" date="2002" name="Genome Biol.">
        <title>A Drosophila full-length cDNA resource.</title>
        <authorList>
            <person name="Stapleton M."/>
            <person name="Carlson J.W."/>
            <person name="Brokstein P."/>
            <person name="Yu C."/>
            <person name="Champe M."/>
            <person name="George R.A."/>
            <person name="Guarin H."/>
            <person name="Kronmiller B."/>
            <person name="Pacleb J.M."/>
            <person name="Park S."/>
            <person name="Wan K.H."/>
            <person name="Rubin G.M."/>
            <person name="Celniker S.E."/>
        </authorList>
    </citation>
    <scope>NUCLEOTIDE SEQUENCE [LARGE SCALE MRNA]</scope>
    <source>
        <strain>Berkeley</strain>
        <tissue>Embryo</tissue>
    </source>
</reference>
<feature type="signal peptide" evidence="1">
    <location>
        <begin position="1"/>
        <end position="21"/>
    </location>
</feature>
<feature type="chain" id="PRO_0000021283" description="Protein folded gastrulation">
    <location>
        <begin position="22"/>
        <end position="730"/>
    </location>
</feature>
<feature type="chain" id="PRO_0000021284" description="G protein-coupled receptor ligand" evidence="1">
    <location>
        <begin position="57"/>
        <end position="167"/>
    </location>
</feature>
<feature type="region of interest" description="Disordered" evidence="2">
    <location>
        <begin position="197"/>
        <end position="222"/>
    </location>
</feature>
<feature type="region of interest" description="Disordered" evidence="2">
    <location>
        <begin position="361"/>
        <end position="424"/>
    </location>
</feature>
<feature type="region of interest" description="Disordered" evidence="2">
    <location>
        <begin position="474"/>
        <end position="526"/>
    </location>
</feature>
<feature type="region of interest" description="Disordered" evidence="2">
    <location>
        <begin position="545"/>
        <end position="583"/>
    </location>
</feature>
<feature type="region of interest" description="Disordered" evidence="2">
    <location>
        <begin position="663"/>
        <end position="683"/>
    </location>
</feature>
<feature type="compositionally biased region" description="Low complexity" evidence="2">
    <location>
        <begin position="197"/>
        <end position="211"/>
    </location>
</feature>
<feature type="compositionally biased region" description="Acidic residues" evidence="2">
    <location>
        <begin position="361"/>
        <end position="385"/>
    </location>
</feature>
<feature type="compositionally biased region" description="Low complexity" evidence="2">
    <location>
        <begin position="386"/>
        <end position="415"/>
    </location>
</feature>
<feature type="compositionally biased region" description="Low complexity" evidence="2">
    <location>
        <begin position="478"/>
        <end position="491"/>
    </location>
</feature>
<feature type="compositionally biased region" description="Polar residues" evidence="2">
    <location>
        <begin position="504"/>
        <end position="513"/>
    </location>
</feature>
<feature type="compositionally biased region" description="Low complexity" evidence="2">
    <location>
        <begin position="567"/>
        <end position="583"/>
    </location>
</feature>
<feature type="compositionally biased region" description="Low complexity" evidence="2">
    <location>
        <begin position="663"/>
        <end position="676"/>
    </location>
</feature>
<feature type="glycosylation site" description="N-linked (GlcNAc...) asparagine" evidence="1">
    <location>
        <position position="51"/>
    </location>
</feature>
<feature type="glycosylation site" description="N-linked (GlcNAc...) asparagine" evidence="1">
    <location>
        <position position="193"/>
    </location>
</feature>
<feature type="glycosylation site" description="N-linked (GlcNAc...) asparagine" evidence="1">
    <location>
        <position position="252"/>
    </location>
</feature>
<feature type="glycosylation site" description="N-linked (GlcNAc...) asparagine" evidence="1">
    <location>
        <position position="289"/>
    </location>
</feature>
<feature type="glycosylation site" description="N-linked (GlcNAc...) asparagine" evidence="1">
    <location>
        <position position="459"/>
    </location>
</feature>
<feature type="glycosylation site" description="N-linked (GlcNAc...) asparagine" evidence="1">
    <location>
        <position position="590"/>
    </location>
</feature>
<feature type="glycosylation site" description="N-linked (GlcNAc...) asparagine" evidence="1">
    <location>
        <position position="639"/>
    </location>
</feature>
<feature type="glycosylation site" description="N-linked (GlcNAc...) asparagine" evidence="1">
    <location>
        <position position="678"/>
    </location>
</feature>
<dbReference type="EMBL" id="U03717">
    <property type="protein sequence ID" value="AAA18955.1"/>
    <property type="molecule type" value="mRNA"/>
</dbReference>
<dbReference type="EMBL" id="AE014298">
    <property type="protein sequence ID" value="AAF50935.1"/>
    <property type="molecule type" value="Genomic_DNA"/>
</dbReference>
<dbReference type="EMBL" id="AY095205">
    <property type="protein sequence ID" value="AAM12298.1"/>
    <property type="molecule type" value="mRNA"/>
</dbReference>
<dbReference type="PIR" id="A53064">
    <property type="entry name" value="A53064"/>
</dbReference>
<dbReference type="RefSeq" id="NP_001033860.1">
    <property type="nucleotide sequence ID" value="NM_001038771.3"/>
</dbReference>
<dbReference type="RefSeq" id="NP_001259781.1">
    <property type="nucleotide sequence ID" value="NM_001272852.1"/>
</dbReference>
<dbReference type="RefSeq" id="NP_001259782.1">
    <property type="nucleotide sequence ID" value="NM_001272853.2"/>
</dbReference>
<dbReference type="RefSeq" id="NP_001259783.1">
    <property type="nucleotide sequence ID" value="NM_001272854.1"/>
</dbReference>
<dbReference type="RefSeq" id="NP_001259784.1">
    <property type="nucleotide sequence ID" value="NM_001272855.2"/>
</dbReference>
<dbReference type="RefSeq" id="NP_523438.1">
    <property type="nucleotide sequence ID" value="NM_078714.6"/>
</dbReference>
<dbReference type="BioGRID" id="59419">
    <property type="interactions" value="14"/>
</dbReference>
<dbReference type="FunCoup" id="P40795">
    <property type="interactions" value="43"/>
</dbReference>
<dbReference type="IntAct" id="P40795">
    <property type="interactions" value="1"/>
</dbReference>
<dbReference type="STRING" id="7227.FBpp0305384"/>
<dbReference type="GlyCosmos" id="P40795">
    <property type="glycosylation" value="8 sites, No reported glycans"/>
</dbReference>
<dbReference type="GlyGen" id="P40795">
    <property type="glycosylation" value="9 sites"/>
</dbReference>
<dbReference type="PaxDb" id="7227-FBpp0305384"/>
<dbReference type="DNASU" id="33148"/>
<dbReference type="EnsemblMetazoa" id="FBtr0077342">
    <property type="protein sequence ID" value="FBpp0077034"/>
    <property type="gene ID" value="FBgn0000719"/>
</dbReference>
<dbReference type="EnsemblMetazoa" id="FBtr0100538">
    <property type="protein sequence ID" value="FBpp0099983"/>
    <property type="gene ID" value="FBgn0000719"/>
</dbReference>
<dbReference type="EnsemblMetazoa" id="FBtr0333179">
    <property type="protein sequence ID" value="FBpp0305381"/>
    <property type="gene ID" value="FBgn0000719"/>
</dbReference>
<dbReference type="EnsemblMetazoa" id="FBtr0333180">
    <property type="protein sequence ID" value="FBpp0305382"/>
    <property type="gene ID" value="FBgn0000719"/>
</dbReference>
<dbReference type="EnsemblMetazoa" id="FBtr0333181">
    <property type="protein sequence ID" value="FBpp0305383"/>
    <property type="gene ID" value="FBgn0000719"/>
</dbReference>
<dbReference type="EnsemblMetazoa" id="FBtr0333182">
    <property type="protein sequence ID" value="FBpp0305384"/>
    <property type="gene ID" value="FBgn0000719"/>
</dbReference>
<dbReference type="GeneID" id="33148"/>
<dbReference type="KEGG" id="dme:Dmel_CG9559"/>
<dbReference type="AGR" id="FB:FBgn0000719"/>
<dbReference type="CTD" id="33148"/>
<dbReference type="FlyBase" id="FBgn0000719">
    <property type="gene designation" value="fog"/>
</dbReference>
<dbReference type="VEuPathDB" id="VectorBase:FBgn0000719"/>
<dbReference type="eggNOG" id="ENOG502S1G9">
    <property type="taxonomic scope" value="Eukaryota"/>
</dbReference>
<dbReference type="HOGENOM" id="CLU_373096_0_0_1"/>
<dbReference type="InParanoid" id="P40795"/>
<dbReference type="OMA" id="TPFWWLP"/>
<dbReference type="OrthoDB" id="8197748at2759"/>
<dbReference type="PhylomeDB" id="P40795"/>
<dbReference type="BioGRID-ORCS" id="33148">
    <property type="hits" value="0 hits in 1 CRISPR screen"/>
</dbReference>
<dbReference type="ChiTaRS" id="fog">
    <property type="organism name" value="fly"/>
</dbReference>
<dbReference type="GenomeRNAi" id="33148"/>
<dbReference type="PRO" id="PR:P40795"/>
<dbReference type="Proteomes" id="UP000000803">
    <property type="component" value="Chromosome X"/>
</dbReference>
<dbReference type="Bgee" id="FBgn0000719">
    <property type="expression patterns" value="Expressed in subperineurial glial cell (Drosophila) in post-embryonic organism and 191 other cell types or tissues"/>
</dbReference>
<dbReference type="ExpressionAtlas" id="P40795">
    <property type="expression patterns" value="baseline and differential"/>
</dbReference>
<dbReference type="GO" id="GO:0005737">
    <property type="term" value="C:cytoplasm"/>
    <property type="evidence" value="ECO:0000314"/>
    <property type="project" value="FlyBase"/>
</dbReference>
<dbReference type="GO" id="GO:0005615">
    <property type="term" value="C:extracellular space"/>
    <property type="evidence" value="ECO:0000314"/>
    <property type="project" value="FlyBase"/>
</dbReference>
<dbReference type="GO" id="GO:0001664">
    <property type="term" value="F:G protein-coupled receptor binding"/>
    <property type="evidence" value="ECO:0000353"/>
    <property type="project" value="FlyBase"/>
</dbReference>
<dbReference type="GO" id="GO:0048018">
    <property type="term" value="F:receptor ligand activity"/>
    <property type="evidence" value="ECO:0000314"/>
    <property type="project" value="FlyBase"/>
</dbReference>
<dbReference type="GO" id="GO:0070252">
    <property type="term" value="P:actin-mediated cell contraction"/>
    <property type="evidence" value="ECO:0000314"/>
    <property type="project" value="FlyBase"/>
</dbReference>
<dbReference type="GO" id="GO:0003383">
    <property type="term" value="P:apical constriction"/>
    <property type="evidence" value="ECO:0000315"/>
    <property type="project" value="FlyBase"/>
</dbReference>
<dbReference type="GO" id="GO:0003384">
    <property type="term" value="P:apical constriction involved in gastrulation"/>
    <property type="evidence" value="ECO:0000315"/>
    <property type="project" value="FlyBase"/>
</dbReference>
<dbReference type="GO" id="GO:0110072">
    <property type="term" value="P:apical constriction involved in ventral furrow formation"/>
    <property type="evidence" value="ECO:0000315"/>
    <property type="project" value="FlyBase"/>
</dbReference>
<dbReference type="GO" id="GO:0007411">
    <property type="term" value="P:axon guidance"/>
    <property type="evidence" value="ECO:0000315"/>
    <property type="project" value="FlyBase"/>
</dbReference>
<dbReference type="GO" id="GO:0007186">
    <property type="term" value="P:G protein-coupled receptor signaling pathway"/>
    <property type="evidence" value="ECO:0000314"/>
    <property type="project" value="FlyBase"/>
</dbReference>
<dbReference type="GO" id="GO:0021782">
    <property type="term" value="P:glial cell development"/>
    <property type="evidence" value="ECO:0000315"/>
    <property type="project" value="FlyBase"/>
</dbReference>
<dbReference type="GO" id="GO:0007476">
    <property type="term" value="P:imaginal disc-derived wing morphogenesis"/>
    <property type="evidence" value="ECO:0000315"/>
    <property type="project" value="FlyBase"/>
</dbReference>
<dbReference type="GO" id="GO:0048383">
    <property type="term" value="P:mesectoderm development"/>
    <property type="evidence" value="ECO:0000315"/>
    <property type="project" value="FlyBase"/>
</dbReference>
<dbReference type="GO" id="GO:0007498">
    <property type="term" value="P:mesoderm development"/>
    <property type="evidence" value="ECO:0000304"/>
    <property type="project" value="FlyBase"/>
</dbReference>
<dbReference type="GO" id="GO:0007509">
    <property type="term" value="P:mesoderm migration involved in gastrulation"/>
    <property type="evidence" value="ECO:0000315"/>
    <property type="project" value="FlyBase"/>
</dbReference>
<dbReference type="GO" id="GO:0000266">
    <property type="term" value="P:mitochondrial fission"/>
    <property type="evidence" value="ECO:0000315"/>
    <property type="project" value="FlyBase"/>
</dbReference>
<dbReference type="GO" id="GO:0016331">
    <property type="term" value="P:morphogenesis of embryonic epithelium"/>
    <property type="evidence" value="ECO:0000315"/>
    <property type="project" value="FlyBase"/>
</dbReference>
<dbReference type="GO" id="GO:0007399">
    <property type="term" value="P:nervous system development"/>
    <property type="evidence" value="ECO:0000315"/>
    <property type="project" value="FlyBase"/>
</dbReference>
<dbReference type="GO" id="GO:0007374">
    <property type="term" value="P:posterior midgut invagination"/>
    <property type="evidence" value="ECO:0000315"/>
    <property type="project" value="FlyBase"/>
</dbReference>
<dbReference type="GO" id="GO:0008360">
    <property type="term" value="P:regulation of cell shape"/>
    <property type="evidence" value="ECO:0000315"/>
    <property type="project" value="FlyBase"/>
</dbReference>
<dbReference type="GO" id="GO:0040034">
    <property type="term" value="P:regulation of development, heterochronic"/>
    <property type="evidence" value="ECO:0000315"/>
    <property type="project" value="FlyBase"/>
</dbReference>
<dbReference type="GO" id="GO:0043519">
    <property type="term" value="P:regulation of myosin II filament organization"/>
    <property type="evidence" value="ECO:0000315"/>
    <property type="project" value="FlyBase"/>
</dbReference>
<dbReference type="GO" id="GO:0060662">
    <property type="term" value="P:salivary gland cavitation"/>
    <property type="evidence" value="ECO:0000315"/>
    <property type="project" value="FlyBase"/>
</dbReference>
<dbReference type="GO" id="GO:0007370">
    <property type="term" value="P:ventral furrow formation"/>
    <property type="evidence" value="ECO:0000315"/>
    <property type="project" value="FlyBase"/>
</dbReference>
<dbReference type="GO" id="GO:0007472">
    <property type="term" value="P:wing disc morphogenesis"/>
    <property type="evidence" value="ECO:0000315"/>
    <property type="project" value="FlyBase"/>
</dbReference>
<dbReference type="InterPro" id="IPR031761">
    <property type="entry name" value="FOG_N"/>
</dbReference>
<dbReference type="Pfam" id="PF15888">
    <property type="entry name" value="FOG_N"/>
    <property type="match status" value="1"/>
</dbReference>
<organism>
    <name type="scientific">Drosophila melanogaster</name>
    <name type="common">Fruit fly</name>
    <dbReference type="NCBI Taxonomy" id="7227"/>
    <lineage>
        <taxon>Eukaryota</taxon>
        <taxon>Metazoa</taxon>
        <taxon>Ecdysozoa</taxon>
        <taxon>Arthropoda</taxon>
        <taxon>Hexapoda</taxon>
        <taxon>Insecta</taxon>
        <taxon>Pterygota</taxon>
        <taxon>Neoptera</taxon>
        <taxon>Endopterygota</taxon>
        <taxon>Diptera</taxon>
        <taxon>Brachycera</taxon>
        <taxon>Muscomorpha</taxon>
        <taxon>Ephydroidea</taxon>
        <taxon>Drosophilidae</taxon>
        <taxon>Drosophila</taxon>
        <taxon>Sophophora</taxon>
    </lineage>
</organism>
<evidence type="ECO:0000255" key="1"/>
<evidence type="ECO:0000256" key="2">
    <source>
        <dbReference type="SAM" id="MobiDB-lite"/>
    </source>
</evidence>
<evidence type="ECO:0000269" key="3">
    <source>
    </source>
</evidence>
<evidence type="ECO:0000305" key="4"/>
<comment type="function">
    <text evidence="3">Coordinates cell shape changes during formation of the ventral furrow and invagination of the posterior midgut primordium, by inducing apical constriction of cells in spatially and temporally defined manners. Could function as a secreted signal to initiate apical constriction by acting as a ligand for an unidentified G protein-coupled receptor, which in turn activates the G protein alpha subunit encoded by concertina, in neighboring cells. Such an intracellular pathway would ultimately induce contraction of the apical actin-myosin network. In the ventral furrow, fog appears to ensure that all the cells initiate constriction within several minutes of each other. In the posterior midgut invagination, fog appears to direct the ordered progression of constriction initiations out from a central region and also to delimit the peripheral extent of this spreading.</text>
</comment>
<comment type="subcellular location">
    <subcellularLocation>
        <location evidence="4">Secreted</location>
        <location evidence="4">Extracellular space</location>
        <location evidence="4">Extracellular matrix</location>
    </subcellularLocation>
</comment>
<comment type="tissue specificity">
    <text evidence="3">Expressed in the invagination primordia in a pattern that precisely precedes the pattern of constrictions.</text>
</comment>
<comment type="developmental stage">
    <text evidence="3">Maternal transcripts are deposited into the egg and uniformly distributed throughout the cortex of cleavage stage and syncytial blastoderm embryos. Zygotic transcription is first found in the ventral furrow primordium during the beginning of cellularization, about 30 minutes before the start of constrictions also expressed about 30 minutes before the start of constrictions in the posterior midgut primordium. The ventral-most cells are last to express fog.</text>
</comment>
<comment type="induction">
    <text evidence="3">Controlled by zygotic patterning genes.</text>
</comment>
<comment type="PTM">
    <text>May be highly O-glycosylated in its Ser/Thr-rich C-terminal part.</text>
</comment>